<evidence type="ECO:0000250" key="1"/>
<evidence type="ECO:0000255" key="2"/>
<evidence type="ECO:0000255" key="3">
    <source>
        <dbReference type="PROSITE-ProRule" id="PRU00691"/>
    </source>
</evidence>
<evidence type="ECO:0000256" key="4">
    <source>
        <dbReference type="SAM" id="MobiDB-lite"/>
    </source>
</evidence>
<evidence type="ECO:0000305" key="5"/>
<dbReference type="EC" id="1.8.-.-"/>
<dbReference type="EMBL" id="AE006914">
    <property type="protein sequence ID" value="AAL02567.1"/>
    <property type="molecule type" value="Genomic_DNA"/>
</dbReference>
<dbReference type="PIR" id="E97703">
    <property type="entry name" value="E97703"/>
</dbReference>
<dbReference type="RefSeq" id="WP_010976717.1">
    <property type="nucleotide sequence ID" value="NC_003103.1"/>
</dbReference>
<dbReference type="SMR" id="Q92JN8"/>
<dbReference type="GeneID" id="928636"/>
<dbReference type="KEGG" id="rco:RC0029"/>
<dbReference type="PATRIC" id="fig|272944.4.peg.36"/>
<dbReference type="HOGENOM" id="CLU_1022630_0_0_5"/>
<dbReference type="Proteomes" id="UP000000816">
    <property type="component" value="Chromosome"/>
</dbReference>
<dbReference type="GO" id="GO:0042597">
    <property type="term" value="C:periplasmic space"/>
    <property type="evidence" value="ECO:0007669"/>
    <property type="project" value="UniProtKB-SubCell"/>
</dbReference>
<dbReference type="GO" id="GO:0015036">
    <property type="term" value="F:disulfide oxidoreductase activity"/>
    <property type="evidence" value="ECO:0007669"/>
    <property type="project" value="UniProtKB-ARBA"/>
</dbReference>
<dbReference type="CDD" id="cd02972">
    <property type="entry name" value="DsbA_family"/>
    <property type="match status" value="1"/>
</dbReference>
<dbReference type="Gene3D" id="3.40.30.10">
    <property type="entry name" value="Glutaredoxin"/>
    <property type="match status" value="1"/>
</dbReference>
<dbReference type="InterPro" id="IPR012336">
    <property type="entry name" value="Thioredoxin-like_fold"/>
</dbReference>
<dbReference type="InterPro" id="IPR036249">
    <property type="entry name" value="Thioredoxin-like_sf"/>
</dbReference>
<dbReference type="InterPro" id="IPR017937">
    <property type="entry name" value="Thioredoxin_CS"/>
</dbReference>
<dbReference type="InterPro" id="IPR013766">
    <property type="entry name" value="Thioredoxin_domain"/>
</dbReference>
<dbReference type="PANTHER" id="PTHR13887:SF14">
    <property type="entry name" value="DISULFIDE BOND FORMATION PROTEIN D"/>
    <property type="match status" value="1"/>
</dbReference>
<dbReference type="PANTHER" id="PTHR13887">
    <property type="entry name" value="GLUTATHIONE S-TRANSFERASE KAPPA"/>
    <property type="match status" value="1"/>
</dbReference>
<dbReference type="Pfam" id="PF13462">
    <property type="entry name" value="Thioredoxin_4"/>
    <property type="match status" value="1"/>
</dbReference>
<dbReference type="SUPFAM" id="SSF52833">
    <property type="entry name" value="Thioredoxin-like"/>
    <property type="match status" value="1"/>
</dbReference>
<dbReference type="PROSITE" id="PS00194">
    <property type="entry name" value="THIOREDOXIN_1"/>
    <property type="match status" value="1"/>
</dbReference>
<dbReference type="PROSITE" id="PS51352">
    <property type="entry name" value="THIOREDOXIN_2"/>
    <property type="match status" value="1"/>
</dbReference>
<feature type="signal peptide" evidence="2">
    <location>
        <begin position="1"/>
        <end position="22"/>
    </location>
</feature>
<feature type="chain" id="PRO_0000259988" description="Putative protein-disulfide oxidoreductase RC0029">
    <location>
        <begin position="23"/>
        <end position="277"/>
    </location>
</feature>
<feature type="domain" description="Thioredoxin" evidence="3">
    <location>
        <begin position="76"/>
        <end position="265"/>
    </location>
</feature>
<feature type="region of interest" description="Disordered" evidence="4">
    <location>
        <begin position="34"/>
        <end position="80"/>
    </location>
</feature>
<feature type="compositionally biased region" description="Polar residues" evidence="4">
    <location>
        <begin position="39"/>
        <end position="80"/>
    </location>
</feature>
<feature type="disulfide bond" description="Redox-active" evidence="3">
    <location>
        <begin position="118"/>
        <end position="121"/>
    </location>
</feature>
<protein>
    <recommendedName>
        <fullName>Putative protein-disulfide oxidoreductase RC0029</fullName>
        <ecNumber>1.8.-.-</ecNumber>
    </recommendedName>
</protein>
<comment type="function">
    <text evidence="1">May be required for disulfide bond formation in some proteins.</text>
</comment>
<comment type="subcellular location">
    <subcellularLocation>
        <location evidence="1">Periplasm</location>
    </subcellularLocation>
</comment>
<comment type="similarity">
    <text evidence="5">Belongs to the thioredoxin family. DsbA subfamily.</text>
</comment>
<gene>
    <name type="ordered locus">RC0029</name>
</gene>
<reference key="1">
    <citation type="journal article" date="2001" name="Science">
        <title>Mechanisms of evolution in Rickettsia conorii and R. prowazekii.</title>
        <authorList>
            <person name="Ogata H."/>
            <person name="Audic S."/>
            <person name="Renesto-Audiffren P."/>
            <person name="Fournier P.-E."/>
            <person name="Barbe V."/>
            <person name="Samson D."/>
            <person name="Roux V."/>
            <person name="Cossart P."/>
            <person name="Weissenbach J."/>
            <person name="Claverie J.-M."/>
            <person name="Raoult D."/>
        </authorList>
    </citation>
    <scope>NUCLEOTIDE SEQUENCE [LARGE SCALE GENOMIC DNA]</scope>
    <source>
        <strain>ATCC VR-613 / Malish 7</strain>
    </source>
</reference>
<sequence>MRSIFIILIFLLFLSSCSEEKAQDKNHEEKQIIEHETQNNETSKATNQEAVNSENTTESIVPANDNNQTDEVSTPASQKQKNPAIKAVKVTFKVDDNDMVLGNKKSNVIVVEYFSPTCPHCAYYHQTIFPELKKKYIDTNKIAYVVREFIATKQDLDAAILARCKGDTNSFTQLHNIILIQQDKWAYSNKYRELLTDIGQLGGISPEEYKQCLNNDKITAILIANTNFVAKAPQFIGTPSFFVNGVQTGNYSIDTISTAVDKALEEQKEKAKNEMSL</sequence>
<accession>Q92JN8</accession>
<name>DSB_RICCN</name>
<organism>
    <name type="scientific">Rickettsia conorii (strain ATCC VR-613 / Malish 7)</name>
    <dbReference type="NCBI Taxonomy" id="272944"/>
    <lineage>
        <taxon>Bacteria</taxon>
        <taxon>Pseudomonadati</taxon>
        <taxon>Pseudomonadota</taxon>
        <taxon>Alphaproteobacteria</taxon>
        <taxon>Rickettsiales</taxon>
        <taxon>Rickettsiaceae</taxon>
        <taxon>Rickettsieae</taxon>
        <taxon>Rickettsia</taxon>
        <taxon>spotted fever group</taxon>
    </lineage>
</organism>
<keyword id="KW-1015">Disulfide bond</keyword>
<keyword id="KW-0560">Oxidoreductase</keyword>
<keyword id="KW-0574">Periplasm</keyword>
<keyword id="KW-0676">Redox-active center</keyword>
<keyword id="KW-0732">Signal</keyword>
<proteinExistence type="inferred from homology"/>